<proteinExistence type="inferred from homology"/>
<name>SMG_ECO45</name>
<reference key="1">
    <citation type="journal article" date="2009" name="PLoS Genet.">
        <title>Organised genome dynamics in the Escherichia coli species results in highly diverse adaptive paths.</title>
        <authorList>
            <person name="Touchon M."/>
            <person name="Hoede C."/>
            <person name="Tenaillon O."/>
            <person name="Barbe V."/>
            <person name="Baeriswyl S."/>
            <person name="Bidet P."/>
            <person name="Bingen E."/>
            <person name="Bonacorsi S."/>
            <person name="Bouchier C."/>
            <person name="Bouvet O."/>
            <person name="Calteau A."/>
            <person name="Chiapello H."/>
            <person name="Clermont O."/>
            <person name="Cruveiller S."/>
            <person name="Danchin A."/>
            <person name="Diard M."/>
            <person name="Dossat C."/>
            <person name="Karoui M.E."/>
            <person name="Frapy E."/>
            <person name="Garry L."/>
            <person name="Ghigo J.M."/>
            <person name="Gilles A.M."/>
            <person name="Johnson J."/>
            <person name="Le Bouguenec C."/>
            <person name="Lescat M."/>
            <person name="Mangenot S."/>
            <person name="Martinez-Jehanne V."/>
            <person name="Matic I."/>
            <person name="Nassif X."/>
            <person name="Oztas S."/>
            <person name="Petit M.A."/>
            <person name="Pichon C."/>
            <person name="Rouy Z."/>
            <person name="Ruf C.S."/>
            <person name="Schneider D."/>
            <person name="Tourret J."/>
            <person name="Vacherie B."/>
            <person name="Vallenet D."/>
            <person name="Medigue C."/>
            <person name="Rocha E.P.C."/>
            <person name="Denamur E."/>
        </authorList>
    </citation>
    <scope>NUCLEOTIDE SEQUENCE [LARGE SCALE GENOMIC DNA]</scope>
    <source>
        <strain>S88 / ExPEC</strain>
    </source>
</reference>
<feature type="chain" id="PRO_1000129884" description="Protein Smg">
    <location>
        <begin position="1"/>
        <end position="157"/>
    </location>
</feature>
<evidence type="ECO:0000255" key="1">
    <source>
        <dbReference type="HAMAP-Rule" id="MF_00598"/>
    </source>
</evidence>
<sequence>MFDVLMYLFETYIHTEAELRVDQDKLEQDLTDAGFDREDIYNALLWLEKLADYQEGLAEPMQLASDPLSMRIYTPEECERLDASCRGFLLFLEQIQVLNLETREMVIERVLALDTAEFDLEDLKWVILMVLFNIPGCENAYQQMEELLFEVNEGMLH</sequence>
<dbReference type="EMBL" id="CU928161">
    <property type="protein sequence ID" value="CAR04889.1"/>
    <property type="molecule type" value="Genomic_DNA"/>
</dbReference>
<dbReference type="RefSeq" id="WP_000460672.1">
    <property type="nucleotide sequence ID" value="NC_011742.1"/>
</dbReference>
<dbReference type="SMR" id="B7MCQ0"/>
<dbReference type="GeneID" id="86948148"/>
<dbReference type="KEGG" id="ecz:ECS88_3672"/>
<dbReference type="HOGENOM" id="CLU_133242_0_0_6"/>
<dbReference type="Proteomes" id="UP000000747">
    <property type="component" value="Chromosome"/>
</dbReference>
<dbReference type="HAMAP" id="MF_00598">
    <property type="entry name" value="Smg"/>
    <property type="match status" value="1"/>
</dbReference>
<dbReference type="InterPro" id="IPR007456">
    <property type="entry name" value="Smg"/>
</dbReference>
<dbReference type="NCBIfam" id="NF002897">
    <property type="entry name" value="PRK03430.1"/>
    <property type="match status" value="1"/>
</dbReference>
<dbReference type="PANTHER" id="PTHR38692">
    <property type="entry name" value="PROTEIN SMG"/>
    <property type="match status" value="1"/>
</dbReference>
<dbReference type="PANTHER" id="PTHR38692:SF1">
    <property type="entry name" value="PROTEIN SMG"/>
    <property type="match status" value="1"/>
</dbReference>
<dbReference type="Pfam" id="PF04361">
    <property type="entry name" value="DUF494"/>
    <property type="match status" value="1"/>
</dbReference>
<comment type="similarity">
    <text evidence="1">Belongs to the Smg family.</text>
</comment>
<organism>
    <name type="scientific">Escherichia coli O45:K1 (strain S88 / ExPEC)</name>
    <dbReference type="NCBI Taxonomy" id="585035"/>
    <lineage>
        <taxon>Bacteria</taxon>
        <taxon>Pseudomonadati</taxon>
        <taxon>Pseudomonadota</taxon>
        <taxon>Gammaproteobacteria</taxon>
        <taxon>Enterobacterales</taxon>
        <taxon>Enterobacteriaceae</taxon>
        <taxon>Escherichia</taxon>
    </lineage>
</organism>
<gene>
    <name evidence="1" type="primary">smg</name>
    <name type="ordered locus">ECS88_3672</name>
</gene>
<keyword id="KW-1185">Reference proteome</keyword>
<accession>B7MCQ0</accession>
<protein>
    <recommendedName>
        <fullName evidence="1">Protein Smg</fullName>
    </recommendedName>
</protein>